<accession>C3LEJ7</accession>
<evidence type="ECO:0000255" key="1">
    <source>
        <dbReference type="HAMAP-Rule" id="MF_00089"/>
    </source>
</evidence>
<evidence type="ECO:0000256" key="2">
    <source>
        <dbReference type="SAM" id="MobiDB-lite"/>
    </source>
</evidence>
<proteinExistence type="inferred from homology"/>
<feature type="chain" id="PRO_1000118500" description="Phosphomethylpyrimidine synthase">
    <location>
        <begin position="1"/>
        <end position="586"/>
    </location>
</feature>
<feature type="region of interest" description="Disordered" evidence="2">
    <location>
        <begin position="1"/>
        <end position="58"/>
    </location>
</feature>
<feature type="compositionally biased region" description="Basic and acidic residues" evidence="2">
    <location>
        <begin position="22"/>
        <end position="39"/>
    </location>
</feature>
<feature type="binding site" evidence="1">
    <location>
        <position position="193"/>
    </location>
    <ligand>
        <name>substrate</name>
    </ligand>
</feature>
<feature type="binding site" evidence="1">
    <location>
        <position position="222"/>
    </location>
    <ligand>
        <name>substrate</name>
    </ligand>
</feature>
<feature type="binding site" evidence="1">
    <location>
        <position position="251"/>
    </location>
    <ligand>
        <name>substrate</name>
    </ligand>
</feature>
<feature type="binding site" evidence="1">
    <location>
        <position position="287"/>
    </location>
    <ligand>
        <name>substrate</name>
    </ligand>
</feature>
<feature type="binding site" evidence="1">
    <location>
        <begin position="307"/>
        <end position="309"/>
    </location>
    <ligand>
        <name>substrate</name>
    </ligand>
</feature>
<feature type="binding site" evidence="1">
    <location>
        <begin position="348"/>
        <end position="351"/>
    </location>
    <ligand>
        <name>substrate</name>
    </ligand>
</feature>
<feature type="binding site" evidence="1">
    <location>
        <position position="387"/>
    </location>
    <ligand>
        <name>substrate</name>
    </ligand>
</feature>
<feature type="binding site" evidence="1">
    <location>
        <position position="391"/>
    </location>
    <ligand>
        <name>Zn(2+)</name>
        <dbReference type="ChEBI" id="CHEBI:29105"/>
    </ligand>
</feature>
<feature type="binding site" evidence="1">
    <location>
        <position position="414"/>
    </location>
    <ligand>
        <name>substrate</name>
    </ligand>
</feature>
<feature type="binding site" evidence="1">
    <location>
        <position position="455"/>
    </location>
    <ligand>
        <name>Zn(2+)</name>
        <dbReference type="ChEBI" id="CHEBI:29105"/>
    </ligand>
</feature>
<feature type="binding site" evidence="1">
    <location>
        <position position="535"/>
    </location>
    <ligand>
        <name>[4Fe-4S] cluster</name>
        <dbReference type="ChEBI" id="CHEBI:49883"/>
        <note>4Fe-4S-S-AdoMet</note>
    </ligand>
</feature>
<feature type="binding site" evidence="1">
    <location>
        <position position="538"/>
    </location>
    <ligand>
        <name>[4Fe-4S] cluster</name>
        <dbReference type="ChEBI" id="CHEBI:49883"/>
        <note>4Fe-4S-S-AdoMet</note>
    </ligand>
</feature>
<feature type="binding site" evidence="1">
    <location>
        <position position="543"/>
    </location>
    <ligand>
        <name>[4Fe-4S] cluster</name>
        <dbReference type="ChEBI" id="CHEBI:49883"/>
        <note>4Fe-4S-S-AdoMet</note>
    </ligand>
</feature>
<name>THIC_BACAC</name>
<organism>
    <name type="scientific">Bacillus anthracis (strain CDC 684 / NRRL 3495)</name>
    <dbReference type="NCBI Taxonomy" id="568206"/>
    <lineage>
        <taxon>Bacteria</taxon>
        <taxon>Bacillati</taxon>
        <taxon>Bacillota</taxon>
        <taxon>Bacilli</taxon>
        <taxon>Bacillales</taxon>
        <taxon>Bacillaceae</taxon>
        <taxon>Bacillus</taxon>
        <taxon>Bacillus cereus group</taxon>
    </lineage>
</organism>
<dbReference type="EC" id="4.1.99.17" evidence="1"/>
<dbReference type="EMBL" id="CP001215">
    <property type="protein sequence ID" value="ACP15219.1"/>
    <property type="molecule type" value="Genomic_DNA"/>
</dbReference>
<dbReference type="RefSeq" id="WP_000814464.1">
    <property type="nucleotide sequence ID" value="NC_012581.1"/>
</dbReference>
<dbReference type="SMR" id="C3LEJ7"/>
<dbReference type="GeneID" id="45025059"/>
<dbReference type="KEGG" id="bah:BAMEG_5511"/>
<dbReference type="HOGENOM" id="CLU_013181_2_1_9"/>
<dbReference type="UniPathway" id="UPA00060"/>
<dbReference type="GO" id="GO:0005829">
    <property type="term" value="C:cytosol"/>
    <property type="evidence" value="ECO:0007669"/>
    <property type="project" value="TreeGrafter"/>
</dbReference>
<dbReference type="GO" id="GO:0051539">
    <property type="term" value="F:4 iron, 4 sulfur cluster binding"/>
    <property type="evidence" value="ECO:0007669"/>
    <property type="project" value="UniProtKB-KW"/>
</dbReference>
<dbReference type="GO" id="GO:0016830">
    <property type="term" value="F:carbon-carbon lyase activity"/>
    <property type="evidence" value="ECO:0007669"/>
    <property type="project" value="InterPro"/>
</dbReference>
<dbReference type="GO" id="GO:0008270">
    <property type="term" value="F:zinc ion binding"/>
    <property type="evidence" value="ECO:0007669"/>
    <property type="project" value="UniProtKB-UniRule"/>
</dbReference>
<dbReference type="GO" id="GO:0009228">
    <property type="term" value="P:thiamine biosynthetic process"/>
    <property type="evidence" value="ECO:0007669"/>
    <property type="project" value="UniProtKB-KW"/>
</dbReference>
<dbReference type="GO" id="GO:0009229">
    <property type="term" value="P:thiamine diphosphate biosynthetic process"/>
    <property type="evidence" value="ECO:0007669"/>
    <property type="project" value="UniProtKB-UniRule"/>
</dbReference>
<dbReference type="FunFam" id="3.20.20.540:FF:000001">
    <property type="entry name" value="Phosphomethylpyrimidine synthase"/>
    <property type="match status" value="1"/>
</dbReference>
<dbReference type="Gene3D" id="6.10.250.620">
    <property type="match status" value="1"/>
</dbReference>
<dbReference type="Gene3D" id="3.20.20.540">
    <property type="entry name" value="Radical SAM ThiC family, central domain"/>
    <property type="match status" value="1"/>
</dbReference>
<dbReference type="HAMAP" id="MF_00089">
    <property type="entry name" value="ThiC"/>
    <property type="match status" value="1"/>
</dbReference>
<dbReference type="InterPro" id="IPR037509">
    <property type="entry name" value="ThiC"/>
</dbReference>
<dbReference type="InterPro" id="IPR025747">
    <property type="entry name" value="ThiC-associated_dom"/>
</dbReference>
<dbReference type="InterPro" id="IPR038521">
    <property type="entry name" value="ThiC/Bza_core_dom"/>
</dbReference>
<dbReference type="InterPro" id="IPR002817">
    <property type="entry name" value="ThiC/BzaA/B"/>
</dbReference>
<dbReference type="NCBIfam" id="NF006763">
    <property type="entry name" value="PRK09284.1"/>
    <property type="match status" value="1"/>
</dbReference>
<dbReference type="NCBIfam" id="NF009895">
    <property type="entry name" value="PRK13352.1"/>
    <property type="match status" value="1"/>
</dbReference>
<dbReference type="NCBIfam" id="TIGR00190">
    <property type="entry name" value="thiC"/>
    <property type="match status" value="1"/>
</dbReference>
<dbReference type="PANTHER" id="PTHR30557:SF1">
    <property type="entry name" value="PHOSPHOMETHYLPYRIMIDINE SYNTHASE, CHLOROPLASTIC"/>
    <property type="match status" value="1"/>
</dbReference>
<dbReference type="PANTHER" id="PTHR30557">
    <property type="entry name" value="THIAMINE BIOSYNTHESIS PROTEIN THIC"/>
    <property type="match status" value="1"/>
</dbReference>
<dbReference type="Pfam" id="PF13667">
    <property type="entry name" value="ThiC-associated"/>
    <property type="match status" value="1"/>
</dbReference>
<dbReference type="Pfam" id="PF01964">
    <property type="entry name" value="ThiC_Rad_SAM"/>
    <property type="match status" value="1"/>
</dbReference>
<dbReference type="SFLD" id="SFLDF00407">
    <property type="entry name" value="phosphomethylpyrimidine_syntha"/>
    <property type="match status" value="1"/>
</dbReference>
<dbReference type="SFLD" id="SFLDG01114">
    <property type="entry name" value="phosphomethylpyrimidine_syntha"/>
    <property type="match status" value="1"/>
</dbReference>
<dbReference type="SFLD" id="SFLDS00113">
    <property type="entry name" value="Radical_SAM_Phosphomethylpyrim"/>
    <property type="match status" value="1"/>
</dbReference>
<reference key="1">
    <citation type="submission" date="2008-10" db="EMBL/GenBank/DDBJ databases">
        <title>Genome sequence of Bacillus anthracis str. CDC 684.</title>
        <authorList>
            <person name="Dodson R.J."/>
            <person name="Munk A.C."/>
            <person name="Brettin T."/>
            <person name="Bruce D."/>
            <person name="Detter C."/>
            <person name="Tapia R."/>
            <person name="Han C."/>
            <person name="Sutton G."/>
            <person name="Sims D."/>
        </authorList>
    </citation>
    <scope>NUCLEOTIDE SEQUENCE [LARGE SCALE GENOMIC DNA]</scope>
    <source>
        <strain>CDC 684 / NRRL 3495</strain>
    </source>
</reference>
<sequence length="586" mass="65798">MKQSVSAEQIELKSSLPGSKKVYVDGPREGMKVPMREIEQSDTNGVPNPPIRVYDTSGPYTDPAYKVELEKGIPTPRHSWILERGDVEAYEGREVKPEDDGVKVASKHTPVFPQMDRKPLRAKQGANVTQMHYARNGIIKSEMEYVAIREGVDPEFVRKEIAEGRAILPANINHPEAEPMIIGRNFHVKVNANIGNSAVSSSIAEEVEKMTWATRWGADTIMDLSTGKNIHTTREWIIRNAPVPVGTVPIYQALEKVNGIAEDLTWEVYRDTLIEQAEQGVDYFTIHAGVLLRYIPITAKRTTGIVSRGGSIMAQWCLFHHKENFLYTHFEEICEIMKQYDVSFSLGDGLRPGSIADANDEAQFSELETLGELTKIAWKHDVQVMIEGPGHVPMHLIKENMEKELDICQGAPFYTLGPLTTDIAPGYDHITSAIGAAMIGWFGTAMLCYVTPKEHLGLPNKDDVREGVITYKIAAHAADLAKGHKTAHQRDDALSKARFEFRWRDQFNLSLDPERAMEYHDETLPAEGAKTAHFCSMCGPKFCSMRISHDIREYAKENDLETTEAIEKGMKEKAKEFKETGSHLYQ</sequence>
<comment type="function">
    <text evidence="1">Catalyzes the synthesis of the hydroxymethylpyrimidine phosphate (HMP-P) moiety of thiamine from aminoimidazole ribotide (AIR) in a radical S-adenosyl-L-methionine (SAM)-dependent reaction.</text>
</comment>
<comment type="catalytic activity">
    <reaction evidence="1">
        <text>5-amino-1-(5-phospho-beta-D-ribosyl)imidazole + S-adenosyl-L-methionine = 4-amino-2-methyl-5-(phosphooxymethyl)pyrimidine + CO + 5'-deoxyadenosine + formate + L-methionine + 3 H(+)</text>
        <dbReference type="Rhea" id="RHEA:24840"/>
        <dbReference type="ChEBI" id="CHEBI:15378"/>
        <dbReference type="ChEBI" id="CHEBI:15740"/>
        <dbReference type="ChEBI" id="CHEBI:17245"/>
        <dbReference type="ChEBI" id="CHEBI:17319"/>
        <dbReference type="ChEBI" id="CHEBI:57844"/>
        <dbReference type="ChEBI" id="CHEBI:58354"/>
        <dbReference type="ChEBI" id="CHEBI:59789"/>
        <dbReference type="ChEBI" id="CHEBI:137981"/>
        <dbReference type="EC" id="4.1.99.17"/>
    </reaction>
</comment>
<comment type="cofactor">
    <cofactor evidence="1">
        <name>[4Fe-4S] cluster</name>
        <dbReference type="ChEBI" id="CHEBI:49883"/>
    </cofactor>
    <text evidence="1">Binds 1 [4Fe-4S] cluster per subunit. The cluster is coordinated with 3 cysteines and an exchangeable S-adenosyl-L-methionine.</text>
</comment>
<comment type="pathway">
    <text evidence="1">Cofactor biosynthesis; thiamine diphosphate biosynthesis.</text>
</comment>
<comment type="similarity">
    <text evidence="1">Belongs to the ThiC family.</text>
</comment>
<protein>
    <recommendedName>
        <fullName evidence="1">Phosphomethylpyrimidine synthase</fullName>
        <ecNumber evidence="1">4.1.99.17</ecNumber>
    </recommendedName>
    <alternativeName>
        <fullName evidence="1">Hydroxymethylpyrimidine phosphate synthase</fullName>
        <shortName evidence="1">HMP-P synthase</shortName>
        <shortName evidence="1">HMP-phosphate synthase</shortName>
        <shortName evidence="1">HMPP synthase</shortName>
    </alternativeName>
    <alternativeName>
        <fullName evidence="1">Thiamine biosynthesis protein ThiC</fullName>
    </alternativeName>
</protein>
<gene>
    <name evidence="1" type="primary">thiC</name>
    <name type="ordered locus">BAMEG_5511</name>
</gene>
<keyword id="KW-0004">4Fe-4S</keyword>
<keyword id="KW-0408">Iron</keyword>
<keyword id="KW-0411">Iron-sulfur</keyword>
<keyword id="KW-0456">Lyase</keyword>
<keyword id="KW-0479">Metal-binding</keyword>
<keyword id="KW-0949">S-adenosyl-L-methionine</keyword>
<keyword id="KW-0784">Thiamine biosynthesis</keyword>
<keyword id="KW-0862">Zinc</keyword>